<name>RL14_AGRFC</name>
<feature type="chain" id="PRO_0000266443" description="Large ribosomal subunit protein uL14">
    <location>
        <begin position="1"/>
        <end position="122"/>
    </location>
</feature>
<gene>
    <name evidence="1" type="primary">rplN</name>
    <name type="ordered locus">Atu1936</name>
    <name type="ORF">AGR_C_3539</name>
</gene>
<protein>
    <recommendedName>
        <fullName evidence="1">Large ribosomal subunit protein uL14</fullName>
    </recommendedName>
    <alternativeName>
        <fullName evidence="2">50S ribosomal protein L14</fullName>
    </alternativeName>
</protein>
<dbReference type="EMBL" id="AE007869">
    <property type="protein sequence ID" value="AAK87699.1"/>
    <property type="molecule type" value="Genomic_DNA"/>
</dbReference>
<dbReference type="PIR" id="AF2814">
    <property type="entry name" value="AF2814"/>
</dbReference>
<dbReference type="PIR" id="B97593">
    <property type="entry name" value="B97593"/>
</dbReference>
<dbReference type="RefSeq" id="NP_354914.1">
    <property type="nucleotide sequence ID" value="NC_003062.2"/>
</dbReference>
<dbReference type="RefSeq" id="WP_003495199.1">
    <property type="nucleotide sequence ID" value="NC_003062.2"/>
</dbReference>
<dbReference type="SMR" id="Q8UE28"/>
<dbReference type="STRING" id="176299.Atu1936"/>
<dbReference type="EnsemblBacteria" id="AAK87699">
    <property type="protein sequence ID" value="AAK87699"/>
    <property type="gene ID" value="Atu1936"/>
</dbReference>
<dbReference type="GeneID" id="97364683"/>
<dbReference type="KEGG" id="atu:Atu1936"/>
<dbReference type="PATRIC" id="fig|176299.10.peg.1948"/>
<dbReference type="eggNOG" id="COG0093">
    <property type="taxonomic scope" value="Bacteria"/>
</dbReference>
<dbReference type="HOGENOM" id="CLU_095071_2_1_5"/>
<dbReference type="OrthoDB" id="9806379at2"/>
<dbReference type="PhylomeDB" id="Q8UE28"/>
<dbReference type="BioCyc" id="AGRO:ATU1936-MONOMER"/>
<dbReference type="PRO" id="PR:Q8UE28"/>
<dbReference type="Proteomes" id="UP000000813">
    <property type="component" value="Chromosome circular"/>
</dbReference>
<dbReference type="GO" id="GO:0022625">
    <property type="term" value="C:cytosolic large ribosomal subunit"/>
    <property type="evidence" value="ECO:0007669"/>
    <property type="project" value="TreeGrafter"/>
</dbReference>
<dbReference type="GO" id="GO:0070180">
    <property type="term" value="F:large ribosomal subunit rRNA binding"/>
    <property type="evidence" value="ECO:0007669"/>
    <property type="project" value="TreeGrafter"/>
</dbReference>
<dbReference type="GO" id="GO:0003735">
    <property type="term" value="F:structural constituent of ribosome"/>
    <property type="evidence" value="ECO:0007669"/>
    <property type="project" value="InterPro"/>
</dbReference>
<dbReference type="GO" id="GO:0006412">
    <property type="term" value="P:translation"/>
    <property type="evidence" value="ECO:0007669"/>
    <property type="project" value="UniProtKB-UniRule"/>
</dbReference>
<dbReference type="CDD" id="cd00337">
    <property type="entry name" value="Ribosomal_uL14"/>
    <property type="match status" value="1"/>
</dbReference>
<dbReference type="FunFam" id="2.40.150.20:FF:000001">
    <property type="entry name" value="50S ribosomal protein L14"/>
    <property type="match status" value="1"/>
</dbReference>
<dbReference type="Gene3D" id="2.40.150.20">
    <property type="entry name" value="Ribosomal protein L14"/>
    <property type="match status" value="1"/>
</dbReference>
<dbReference type="HAMAP" id="MF_01367">
    <property type="entry name" value="Ribosomal_uL14"/>
    <property type="match status" value="1"/>
</dbReference>
<dbReference type="InterPro" id="IPR000218">
    <property type="entry name" value="Ribosomal_uL14"/>
</dbReference>
<dbReference type="InterPro" id="IPR005745">
    <property type="entry name" value="Ribosomal_uL14_bac-type"/>
</dbReference>
<dbReference type="InterPro" id="IPR019972">
    <property type="entry name" value="Ribosomal_uL14_CS"/>
</dbReference>
<dbReference type="InterPro" id="IPR036853">
    <property type="entry name" value="Ribosomal_uL14_sf"/>
</dbReference>
<dbReference type="NCBIfam" id="TIGR01067">
    <property type="entry name" value="rplN_bact"/>
    <property type="match status" value="1"/>
</dbReference>
<dbReference type="PANTHER" id="PTHR11761">
    <property type="entry name" value="50S/60S RIBOSOMAL PROTEIN L14/L23"/>
    <property type="match status" value="1"/>
</dbReference>
<dbReference type="PANTHER" id="PTHR11761:SF3">
    <property type="entry name" value="LARGE RIBOSOMAL SUBUNIT PROTEIN UL14M"/>
    <property type="match status" value="1"/>
</dbReference>
<dbReference type="Pfam" id="PF00238">
    <property type="entry name" value="Ribosomal_L14"/>
    <property type="match status" value="1"/>
</dbReference>
<dbReference type="SMART" id="SM01374">
    <property type="entry name" value="Ribosomal_L14"/>
    <property type="match status" value="1"/>
</dbReference>
<dbReference type="SUPFAM" id="SSF50193">
    <property type="entry name" value="Ribosomal protein L14"/>
    <property type="match status" value="1"/>
</dbReference>
<dbReference type="PROSITE" id="PS00049">
    <property type="entry name" value="RIBOSOMAL_L14"/>
    <property type="match status" value="1"/>
</dbReference>
<sequence length="122" mass="13406">MIQMQTNLDVADNSGARRVMCIKVLGGSKRKYASVGDIIVVSIKEAIPRGRVKKGDVMKAVVVRTAKDIRRADGSVIRFDNNAAVLIDNKKEPIGTRIFGPVPRELRAKNHMKIISLAPEVL</sequence>
<keyword id="KW-1185">Reference proteome</keyword>
<keyword id="KW-0687">Ribonucleoprotein</keyword>
<keyword id="KW-0689">Ribosomal protein</keyword>
<keyword id="KW-0694">RNA-binding</keyword>
<keyword id="KW-0699">rRNA-binding</keyword>
<proteinExistence type="inferred from homology"/>
<reference key="1">
    <citation type="journal article" date="2001" name="Science">
        <title>The genome of the natural genetic engineer Agrobacterium tumefaciens C58.</title>
        <authorList>
            <person name="Wood D.W."/>
            <person name="Setubal J.C."/>
            <person name="Kaul R."/>
            <person name="Monks D.E."/>
            <person name="Kitajima J.P."/>
            <person name="Okura V.K."/>
            <person name="Zhou Y."/>
            <person name="Chen L."/>
            <person name="Wood G.E."/>
            <person name="Almeida N.F. Jr."/>
            <person name="Woo L."/>
            <person name="Chen Y."/>
            <person name="Paulsen I.T."/>
            <person name="Eisen J.A."/>
            <person name="Karp P.D."/>
            <person name="Bovee D. Sr."/>
            <person name="Chapman P."/>
            <person name="Clendenning J."/>
            <person name="Deatherage G."/>
            <person name="Gillet W."/>
            <person name="Grant C."/>
            <person name="Kutyavin T."/>
            <person name="Levy R."/>
            <person name="Li M.-J."/>
            <person name="McClelland E."/>
            <person name="Palmieri A."/>
            <person name="Raymond C."/>
            <person name="Rouse G."/>
            <person name="Saenphimmachak C."/>
            <person name="Wu Z."/>
            <person name="Romero P."/>
            <person name="Gordon D."/>
            <person name="Zhang S."/>
            <person name="Yoo H."/>
            <person name="Tao Y."/>
            <person name="Biddle P."/>
            <person name="Jung M."/>
            <person name="Krespan W."/>
            <person name="Perry M."/>
            <person name="Gordon-Kamm B."/>
            <person name="Liao L."/>
            <person name="Kim S."/>
            <person name="Hendrick C."/>
            <person name="Zhao Z.-Y."/>
            <person name="Dolan M."/>
            <person name="Chumley F."/>
            <person name="Tingey S.V."/>
            <person name="Tomb J.-F."/>
            <person name="Gordon M.P."/>
            <person name="Olson M.V."/>
            <person name="Nester E.W."/>
        </authorList>
    </citation>
    <scope>NUCLEOTIDE SEQUENCE [LARGE SCALE GENOMIC DNA]</scope>
    <source>
        <strain>C58 / ATCC 33970</strain>
    </source>
</reference>
<reference key="2">
    <citation type="journal article" date="2001" name="Science">
        <title>Genome sequence of the plant pathogen and biotechnology agent Agrobacterium tumefaciens C58.</title>
        <authorList>
            <person name="Goodner B."/>
            <person name="Hinkle G."/>
            <person name="Gattung S."/>
            <person name="Miller N."/>
            <person name="Blanchard M."/>
            <person name="Qurollo B."/>
            <person name="Goldman B.S."/>
            <person name="Cao Y."/>
            <person name="Askenazi M."/>
            <person name="Halling C."/>
            <person name="Mullin L."/>
            <person name="Houmiel K."/>
            <person name="Gordon J."/>
            <person name="Vaudin M."/>
            <person name="Iartchouk O."/>
            <person name="Epp A."/>
            <person name="Liu F."/>
            <person name="Wollam C."/>
            <person name="Allinger M."/>
            <person name="Doughty D."/>
            <person name="Scott C."/>
            <person name="Lappas C."/>
            <person name="Markelz B."/>
            <person name="Flanagan C."/>
            <person name="Crowell C."/>
            <person name="Gurson J."/>
            <person name="Lomo C."/>
            <person name="Sear C."/>
            <person name="Strub G."/>
            <person name="Cielo C."/>
            <person name="Slater S."/>
        </authorList>
    </citation>
    <scope>NUCLEOTIDE SEQUENCE [LARGE SCALE GENOMIC DNA]</scope>
    <source>
        <strain>C58 / ATCC 33970</strain>
    </source>
</reference>
<accession>Q8UE28</accession>
<accession>Q7CY76</accession>
<evidence type="ECO:0000255" key="1">
    <source>
        <dbReference type="HAMAP-Rule" id="MF_01367"/>
    </source>
</evidence>
<evidence type="ECO:0000305" key="2"/>
<organism>
    <name type="scientific">Agrobacterium fabrum (strain C58 / ATCC 33970)</name>
    <name type="common">Agrobacterium tumefaciens (strain C58)</name>
    <dbReference type="NCBI Taxonomy" id="176299"/>
    <lineage>
        <taxon>Bacteria</taxon>
        <taxon>Pseudomonadati</taxon>
        <taxon>Pseudomonadota</taxon>
        <taxon>Alphaproteobacteria</taxon>
        <taxon>Hyphomicrobiales</taxon>
        <taxon>Rhizobiaceae</taxon>
        <taxon>Rhizobium/Agrobacterium group</taxon>
        <taxon>Agrobacterium</taxon>
        <taxon>Agrobacterium tumefaciens complex</taxon>
    </lineage>
</organism>
<comment type="function">
    <text evidence="1">Binds to 23S rRNA. Forms part of two intersubunit bridges in the 70S ribosome.</text>
</comment>
<comment type="subunit">
    <text evidence="1">Part of the 50S ribosomal subunit. Forms a cluster with proteins L3 and L19. In the 70S ribosome, L14 and L19 interact and together make contacts with the 16S rRNA in bridges B5 and B8.</text>
</comment>
<comment type="similarity">
    <text evidence="1">Belongs to the universal ribosomal protein uL14 family.</text>
</comment>